<proteinExistence type="inferred from homology"/>
<reference key="1">
    <citation type="journal article" date="2000" name="Am. J. Bot.">
        <title>Relationships within Cupressaceae sensu lato: a combined morphological and molecular approach.</title>
        <authorList>
            <person name="Gadek P.A."/>
            <person name="Alpers D.L."/>
            <person name="Heslewood M.M."/>
            <person name="Quinn C.J."/>
        </authorList>
    </citation>
    <scope>NUCLEOTIDE SEQUENCE [GENOMIC DNA]</scope>
</reference>
<keyword id="KW-0150">Chloroplast</keyword>
<keyword id="KW-0507">mRNA processing</keyword>
<keyword id="KW-0934">Plastid</keyword>
<keyword id="KW-0694">RNA-binding</keyword>
<keyword id="KW-0819">tRNA processing</keyword>
<feature type="chain" id="PRO_0000143519" description="Maturase K">
    <location>
        <begin position="1"/>
        <end position="509"/>
    </location>
</feature>
<dbReference type="EMBL" id="AF152203">
    <property type="protein sequence ID" value="AAF25756.1"/>
    <property type="molecule type" value="Genomic_DNA"/>
</dbReference>
<dbReference type="GO" id="GO:0009507">
    <property type="term" value="C:chloroplast"/>
    <property type="evidence" value="ECO:0007669"/>
    <property type="project" value="UniProtKB-SubCell"/>
</dbReference>
<dbReference type="GO" id="GO:0003723">
    <property type="term" value="F:RNA binding"/>
    <property type="evidence" value="ECO:0007669"/>
    <property type="project" value="UniProtKB-KW"/>
</dbReference>
<dbReference type="GO" id="GO:0006397">
    <property type="term" value="P:mRNA processing"/>
    <property type="evidence" value="ECO:0007669"/>
    <property type="project" value="UniProtKB-KW"/>
</dbReference>
<dbReference type="GO" id="GO:0008380">
    <property type="term" value="P:RNA splicing"/>
    <property type="evidence" value="ECO:0007669"/>
    <property type="project" value="UniProtKB-UniRule"/>
</dbReference>
<dbReference type="GO" id="GO:0008033">
    <property type="term" value="P:tRNA processing"/>
    <property type="evidence" value="ECO:0007669"/>
    <property type="project" value="UniProtKB-KW"/>
</dbReference>
<dbReference type="HAMAP" id="MF_01390">
    <property type="entry name" value="MatK"/>
    <property type="match status" value="1"/>
</dbReference>
<dbReference type="InterPro" id="IPR024937">
    <property type="entry name" value="Domain_X"/>
</dbReference>
<dbReference type="InterPro" id="IPR002866">
    <property type="entry name" value="Maturase_MatK"/>
</dbReference>
<dbReference type="InterPro" id="IPR024942">
    <property type="entry name" value="Maturase_MatK_N"/>
</dbReference>
<dbReference type="PANTHER" id="PTHR34811">
    <property type="entry name" value="MATURASE K"/>
    <property type="match status" value="1"/>
</dbReference>
<dbReference type="PANTHER" id="PTHR34811:SF1">
    <property type="entry name" value="MATURASE K"/>
    <property type="match status" value="1"/>
</dbReference>
<dbReference type="Pfam" id="PF01348">
    <property type="entry name" value="Intron_maturas2"/>
    <property type="match status" value="1"/>
</dbReference>
<dbReference type="Pfam" id="PF01824">
    <property type="entry name" value="MatK_N"/>
    <property type="match status" value="1"/>
</dbReference>
<comment type="function">
    <text evidence="1">Usually encoded in the trnK tRNA gene intron. Probably assists in splicing its own and other chloroplast group II introns.</text>
</comment>
<comment type="subcellular location">
    <subcellularLocation>
        <location>Plastid</location>
        <location>Chloroplast</location>
    </subcellularLocation>
</comment>
<comment type="similarity">
    <text evidence="1">Belongs to the intron maturase 2 family. MatK subfamily.</text>
</comment>
<accession>Q9MST4</accession>
<name>MATK_METGY</name>
<sequence length="509" mass="61272">MDEFQRNENKHRSWQQFFLYPLFFREDLYAIAHDHHLDRSGSSEPTEILVSHFFSFLTVKRSIRRIRKQNNSISLLRNCDRNQFSECKKNXCSKSLLEGLTVVLEVSFAMRSKHFIEGMDGWNSIRSIHCIFPLMEDKLTHSNYISDIRVPYSIHPEILVRIFRRWIRDTPSLHLLRSILHEWQNSFSRDNLQKAIITPRENTRFSLFLWNSYVHECESFLVPLVKRFFNSQSLLYGSFPDRTHFDKKMKHIVILXXRQISTKKIWLLKDSFMHYVRYGERSLIALKGTHLEVKKWRYHLFHFWQYYFHLWFQPYRIRSLELSKTYSSFLGYFLHVKMRPLVVRAKMLDNLFITDLITNELKLIAPIRSILFFLAKEKFCDISGWPISKLSWTSLSDDDILDRFDRIWINLFHYYSGSMNQDGLYHIKYILLLSCAKTLACKHKTTIRVVREQLGSELFTKSFSKEREFISSSFSKNRLKRERIWNSEISQINPLANFWQNMQNKQIEN</sequence>
<gene>
    <name evidence="1" type="primary">matK</name>
</gene>
<protein>
    <recommendedName>
        <fullName evidence="1">Maturase K</fullName>
    </recommendedName>
    <alternativeName>
        <fullName evidence="1">Intron maturase</fullName>
    </alternativeName>
</protein>
<geneLocation type="chloroplast"/>
<evidence type="ECO:0000255" key="1">
    <source>
        <dbReference type="HAMAP-Rule" id="MF_01390"/>
    </source>
</evidence>
<organism>
    <name type="scientific">Metasequoia glyptostroboides</name>
    <name type="common">Dawn redwood</name>
    <name type="synonym">Sequoia glyptostroboides</name>
    <dbReference type="NCBI Taxonomy" id="3371"/>
    <lineage>
        <taxon>Eukaryota</taxon>
        <taxon>Viridiplantae</taxon>
        <taxon>Streptophyta</taxon>
        <taxon>Embryophyta</taxon>
        <taxon>Tracheophyta</taxon>
        <taxon>Spermatophyta</taxon>
        <taxon>Pinopsida</taxon>
        <taxon>Pinidae</taxon>
        <taxon>Conifers II</taxon>
        <taxon>Cupressales</taxon>
        <taxon>Cupressaceae</taxon>
        <taxon>Metasequoia</taxon>
    </lineage>
</organism>